<sequence>MAADPKDTTVTDENTETAATAEVETVASAPTSPAQKLSAEALIKAFETEQMKSDLPEIYVGDTVRVGVRISEGNKERVQPYEGVVISKRHGGMNQTITVRRIFQGIGVERVFMLHSPQVANIKVERRGKVRRAKLFYLRERVGKATRVKQRFDR</sequence>
<dbReference type="EMBL" id="BX569694">
    <property type="protein sequence ID" value="CAE08339.1"/>
    <property type="molecule type" value="Genomic_DNA"/>
</dbReference>
<dbReference type="RefSeq" id="WP_011128684.1">
    <property type="nucleotide sequence ID" value="NC_005070.1"/>
</dbReference>
<dbReference type="SMR" id="Q7U583"/>
<dbReference type="STRING" id="84588.SYNW1824"/>
<dbReference type="KEGG" id="syw:SYNW1824"/>
<dbReference type="eggNOG" id="COG0335">
    <property type="taxonomic scope" value="Bacteria"/>
</dbReference>
<dbReference type="HOGENOM" id="CLU_103507_2_0_3"/>
<dbReference type="Proteomes" id="UP000001422">
    <property type="component" value="Chromosome"/>
</dbReference>
<dbReference type="GO" id="GO:0022625">
    <property type="term" value="C:cytosolic large ribosomal subunit"/>
    <property type="evidence" value="ECO:0007669"/>
    <property type="project" value="TreeGrafter"/>
</dbReference>
<dbReference type="GO" id="GO:0003735">
    <property type="term" value="F:structural constituent of ribosome"/>
    <property type="evidence" value="ECO:0007669"/>
    <property type="project" value="InterPro"/>
</dbReference>
<dbReference type="GO" id="GO:0006412">
    <property type="term" value="P:translation"/>
    <property type="evidence" value="ECO:0007669"/>
    <property type="project" value="UniProtKB-UniRule"/>
</dbReference>
<dbReference type="FunFam" id="2.30.30.790:FF:000001">
    <property type="entry name" value="50S ribosomal protein L19"/>
    <property type="match status" value="1"/>
</dbReference>
<dbReference type="Gene3D" id="2.30.30.790">
    <property type="match status" value="1"/>
</dbReference>
<dbReference type="HAMAP" id="MF_00402">
    <property type="entry name" value="Ribosomal_bL19"/>
    <property type="match status" value="1"/>
</dbReference>
<dbReference type="InterPro" id="IPR001857">
    <property type="entry name" value="Ribosomal_bL19"/>
</dbReference>
<dbReference type="InterPro" id="IPR018257">
    <property type="entry name" value="Ribosomal_bL19_CS"/>
</dbReference>
<dbReference type="InterPro" id="IPR038657">
    <property type="entry name" value="Ribosomal_bL19_sf"/>
</dbReference>
<dbReference type="InterPro" id="IPR008991">
    <property type="entry name" value="Translation_prot_SH3-like_sf"/>
</dbReference>
<dbReference type="NCBIfam" id="TIGR01024">
    <property type="entry name" value="rplS_bact"/>
    <property type="match status" value="1"/>
</dbReference>
<dbReference type="PANTHER" id="PTHR15680:SF9">
    <property type="entry name" value="LARGE RIBOSOMAL SUBUNIT PROTEIN BL19M"/>
    <property type="match status" value="1"/>
</dbReference>
<dbReference type="PANTHER" id="PTHR15680">
    <property type="entry name" value="RIBOSOMAL PROTEIN L19"/>
    <property type="match status" value="1"/>
</dbReference>
<dbReference type="Pfam" id="PF01245">
    <property type="entry name" value="Ribosomal_L19"/>
    <property type="match status" value="1"/>
</dbReference>
<dbReference type="PRINTS" id="PR00061">
    <property type="entry name" value="RIBOSOMALL19"/>
</dbReference>
<dbReference type="SUPFAM" id="SSF50104">
    <property type="entry name" value="Translation proteins SH3-like domain"/>
    <property type="match status" value="1"/>
</dbReference>
<dbReference type="PROSITE" id="PS01015">
    <property type="entry name" value="RIBOSOMAL_L19"/>
    <property type="match status" value="1"/>
</dbReference>
<feature type="chain" id="PRO_0000163554" description="Large ribosomal subunit protein bL19">
    <location>
        <begin position="1"/>
        <end position="154"/>
    </location>
</feature>
<feature type="region of interest" description="Disordered" evidence="2">
    <location>
        <begin position="1"/>
        <end position="33"/>
    </location>
</feature>
<feature type="compositionally biased region" description="Low complexity" evidence="2">
    <location>
        <begin position="16"/>
        <end position="27"/>
    </location>
</feature>
<evidence type="ECO:0000255" key="1">
    <source>
        <dbReference type="HAMAP-Rule" id="MF_00402"/>
    </source>
</evidence>
<evidence type="ECO:0000256" key="2">
    <source>
        <dbReference type="SAM" id="MobiDB-lite"/>
    </source>
</evidence>
<evidence type="ECO:0000305" key="3"/>
<comment type="function">
    <text evidence="1">This protein is located at the 30S-50S ribosomal subunit interface and may play a role in the structure and function of the aminoacyl-tRNA binding site.</text>
</comment>
<comment type="similarity">
    <text evidence="1">Belongs to the bacterial ribosomal protein bL19 family.</text>
</comment>
<keyword id="KW-0687">Ribonucleoprotein</keyword>
<keyword id="KW-0689">Ribosomal protein</keyword>
<reference key="1">
    <citation type="journal article" date="2003" name="Nature">
        <title>The genome of a motile marine Synechococcus.</title>
        <authorList>
            <person name="Palenik B."/>
            <person name="Brahamsha B."/>
            <person name="Larimer F.W."/>
            <person name="Land M.L."/>
            <person name="Hauser L."/>
            <person name="Chain P."/>
            <person name="Lamerdin J.E."/>
            <person name="Regala W."/>
            <person name="Allen E.E."/>
            <person name="McCarren J."/>
            <person name="Paulsen I.T."/>
            <person name="Dufresne A."/>
            <person name="Partensky F."/>
            <person name="Webb E.A."/>
            <person name="Waterbury J."/>
        </authorList>
    </citation>
    <scope>NUCLEOTIDE SEQUENCE [LARGE SCALE GENOMIC DNA]</scope>
    <source>
        <strain>WH8102</strain>
    </source>
</reference>
<protein>
    <recommendedName>
        <fullName evidence="1">Large ribosomal subunit protein bL19</fullName>
    </recommendedName>
    <alternativeName>
        <fullName evidence="3">50S ribosomal protein L19</fullName>
    </alternativeName>
</protein>
<organism>
    <name type="scientific">Parasynechococcus marenigrum (strain WH8102)</name>
    <dbReference type="NCBI Taxonomy" id="84588"/>
    <lineage>
        <taxon>Bacteria</taxon>
        <taxon>Bacillati</taxon>
        <taxon>Cyanobacteriota</taxon>
        <taxon>Cyanophyceae</taxon>
        <taxon>Synechococcales</taxon>
        <taxon>Prochlorococcaceae</taxon>
        <taxon>Parasynechococcus</taxon>
        <taxon>Parasynechococcus marenigrum</taxon>
    </lineage>
</organism>
<accession>Q7U583</accession>
<gene>
    <name evidence="1" type="primary">rplS</name>
    <name evidence="1" type="synonym">rpl19</name>
    <name type="ordered locus">SYNW1824</name>
</gene>
<proteinExistence type="inferred from homology"/>
<name>RL19_PARMW</name>